<evidence type="ECO:0000255" key="1">
    <source>
        <dbReference type="HAMAP-Rule" id="MF_01013"/>
    </source>
</evidence>
<accession>B8EM84</accession>
<feature type="chain" id="PRO_1000148929" description="Imidazole glycerol phosphate synthase subunit HisF">
    <location>
        <begin position="1"/>
        <end position="256"/>
    </location>
</feature>
<feature type="active site" evidence="1">
    <location>
        <position position="11"/>
    </location>
</feature>
<feature type="active site" evidence="1">
    <location>
        <position position="130"/>
    </location>
</feature>
<reference key="1">
    <citation type="journal article" date="2010" name="J. Bacteriol.">
        <title>Complete genome sequence of the aerobic facultative methanotroph Methylocella silvestris BL2.</title>
        <authorList>
            <person name="Chen Y."/>
            <person name="Crombie A."/>
            <person name="Rahman M.T."/>
            <person name="Dedysh S.N."/>
            <person name="Liesack W."/>
            <person name="Stott M.B."/>
            <person name="Alam M."/>
            <person name="Theisen A.R."/>
            <person name="Murrell J.C."/>
            <person name="Dunfield P.F."/>
        </authorList>
    </citation>
    <scope>NUCLEOTIDE SEQUENCE [LARGE SCALE GENOMIC DNA]</scope>
    <source>
        <strain>DSM 15510 / CIP 108128 / LMG 27833 / NCIMB 13906 / BL2</strain>
    </source>
</reference>
<name>HIS6_METSB</name>
<sequence>MLKSRIIPCLDVKDGRVVKGVNFVDLTDAGDPVEAAIRYDAAGADELCFLDITASSDDRPILLDVVRRTAEACFMPLTVGGGVRTLDDIRALLLAGADKASIMTAAVANRDFVREAAEKFGSQCVVVAIDAKQVRPGRWEIFTHGGRKPTGLDAVDYAREVVALGAGEILLTSMDRDGAKTGFDIPLTKAVTDAVNVPVIASGGVGTLDHLVEGVRDGGASAVLAASIFHFGEFTIAEAKLHMANCGLRMRLDGIV</sequence>
<comment type="function">
    <text evidence="1">IGPS catalyzes the conversion of PRFAR and glutamine to IGP, AICAR and glutamate. The HisF subunit catalyzes the cyclization activity that produces IGP and AICAR from PRFAR using the ammonia provided by the HisH subunit.</text>
</comment>
<comment type="catalytic activity">
    <reaction evidence="1">
        <text>5-[(5-phospho-1-deoxy-D-ribulos-1-ylimino)methylamino]-1-(5-phospho-beta-D-ribosyl)imidazole-4-carboxamide + L-glutamine = D-erythro-1-(imidazol-4-yl)glycerol 3-phosphate + 5-amino-1-(5-phospho-beta-D-ribosyl)imidazole-4-carboxamide + L-glutamate + H(+)</text>
        <dbReference type="Rhea" id="RHEA:24793"/>
        <dbReference type="ChEBI" id="CHEBI:15378"/>
        <dbReference type="ChEBI" id="CHEBI:29985"/>
        <dbReference type="ChEBI" id="CHEBI:58278"/>
        <dbReference type="ChEBI" id="CHEBI:58359"/>
        <dbReference type="ChEBI" id="CHEBI:58475"/>
        <dbReference type="ChEBI" id="CHEBI:58525"/>
        <dbReference type="EC" id="4.3.2.10"/>
    </reaction>
</comment>
<comment type="pathway">
    <text evidence="1">Amino-acid biosynthesis; L-histidine biosynthesis; L-histidine from 5-phospho-alpha-D-ribose 1-diphosphate: step 5/9.</text>
</comment>
<comment type="subunit">
    <text evidence="1">Heterodimer of HisH and HisF.</text>
</comment>
<comment type="subcellular location">
    <subcellularLocation>
        <location evidence="1">Cytoplasm</location>
    </subcellularLocation>
</comment>
<comment type="similarity">
    <text evidence="1">Belongs to the HisA/HisF family.</text>
</comment>
<organism>
    <name type="scientific">Methylocella silvestris (strain DSM 15510 / CIP 108128 / LMG 27833 / NCIMB 13906 / BL2)</name>
    <dbReference type="NCBI Taxonomy" id="395965"/>
    <lineage>
        <taxon>Bacteria</taxon>
        <taxon>Pseudomonadati</taxon>
        <taxon>Pseudomonadota</taxon>
        <taxon>Alphaproteobacteria</taxon>
        <taxon>Hyphomicrobiales</taxon>
        <taxon>Beijerinckiaceae</taxon>
        <taxon>Methylocella</taxon>
    </lineage>
</organism>
<protein>
    <recommendedName>
        <fullName evidence="1">Imidazole glycerol phosphate synthase subunit HisF</fullName>
        <ecNumber evidence="1">4.3.2.10</ecNumber>
    </recommendedName>
    <alternativeName>
        <fullName evidence="1">IGP synthase cyclase subunit</fullName>
    </alternativeName>
    <alternativeName>
        <fullName evidence="1">IGP synthase subunit HisF</fullName>
    </alternativeName>
    <alternativeName>
        <fullName evidence="1">ImGP synthase subunit HisF</fullName>
        <shortName evidence="1">IGPS subunit HisF</shortName>
    </alternativeName>
</protein>
<keyword id="KW-0028">Amino-acid biosynthesis</keyword>
<keyword id="KW-0963">Cytoplasm</keyword>
<keyword id="KW-0368">Histidine biosynthesis</keyword>
<keyword id="KW-0456">Lyase</keyword>
<keyword id="KW-1185">Reference proteome</keyword>
<dbReference type="EC" id="4.3.2.10" evidence="1"/>
<dbReference type="EMBL" id="CP001280">
    <property type="protein sequence ID" value="ACK51473.1"/>
    <property type="molecule type" value="Genomic_DNA"/>
</dbReference>
<dbReference type="RefSeq" id="WP_012591542.1">
    <property type="nucleotide sequence ID" value="NC_011666.1"/>
</dbReference>
<dbReference type="SMR" id="B8EM84"/>
<dbReference type="STRING" id="395965.Msil_2549"/>
<dbReference type="KEGG" id="msl:Msil_2549"/>
<dbReference type="eggNOG" id="COG0107">
    <property type="taxonomic scope" value="Bacteria"/>
</dbReference>
<dbReference type="HOGENOM" id="CLU_048577_4_0_5"/>
<dbReference type="OrthoDB" id="9781903at2"/>
<dbReference type="UniPathway" id="UPA00031">
    <property type="reaction ID" value="UER00010"/>
</dbReference>
<dbReference type="Proteomes" id="UP000002257">
    <property type="component" value="Chromosome"/>
</dbReference>
<dbReference type="GO" id="GO:0005737">
    <property type="term" value="C:cytoplasm"/>
    <property type="evidence" value="ECO:0007669"/>
    <property type="project" value="UniProtKB-SubCell"/>
</dbReference>
<dbReference type="GO" id="GO:0000107">
    <property type="term" value="F:imidazoleglycerol-phosphate synthase activity"/>
    <property type="evidence" value="ECO:0007669"/>
    <property type="project" value="UniProtKB-UniRule"/>
</dbReference>
<dbReference type="GO" id="GO:0016829">
    <property type="term" value="F:lyase activity"/>
    <property type="evidence" value="ECO:0007669"/>
    <property type="project" value="UniProtKB-KW"/>
</dbReference>
<dbReference type="GO" id="GO:0000105">
    <property type="term" value="P:L-histidine biosynthetic process"/>
    <property type="evidence" value="ECO:0007669"/>
    <property type="project" value="UniProtKB-UniRule"/>
</dbReference>
<dbReference type="CDD" id="cd04731">
    <property type="entry name" value="HisF"/>
    <property type="match status" value="1"/>
</dbReference>
<dbReference type="FunFam" id="3.20.20.70:FF:000006">
    <property type="entry name" value="Imidazole glycerol phosphate synthase subunit HisF"/>
    <property type="match status" value="1"/>
</dbReference>
<dbReference type="Gene3D" id="3.20.20.70">
    <property type="entry name" value="Aldolase class I"/>
    <property type="match status" value="1"/>
</dbReference>
<dbReference type="HAMAP" id="MF_01013">
    <property type="entry name" value="HisF"/>
    <property type="match status" value="1"/>
</dbReference>
<dbReference type="InterPro" id="IPR013785">
    <property type="entry name" value="Aldolase_TIM"/>
</dbReference>
<dbReference type="InterPro" id="IPR006062">
    <property type="entry name" value="His_biosynth"/>
</dbReference>
<dbReference type="InterPro" id="IPR004651">
    <property type="entry name" value="HisF"/>
</dbReference>
<dbReference type="InterPro" id="IPR050064">
    <property type="entry name" value="IGPS_HisA/HisF"/>
</dbReference>
<dbReference type="InterPro" id="IPR011060">
    <property type="entry name" value="RibuloseP-bd_barrel"/>
</dbReference>
<dbReference type="NCBIfam" id="TIGR00735">
    <property type="entry name" value="hisF"/>
    <property type="match status" value="1"/>
</dbReference>
<dbReference type="PANTHER" id="PTHR21235:SF2">
    <property type="entry name" value="IMIDAZOLE GLYCEROL PHOSPHATE SYNTHASE HISHF"/>
    <property type="match status" value="1"/>
</dbReference>
<dbReference type="PANTHER" id="PTHR21235">
    <property type="entry name" value="IMIDAZOLE GLYCEROL PHOSPHATE SYNTHASE SUBUNIT HISF/H IGP SYNTHASE SUBUNIT HISF/H"/>
    <property type="match status" value="1"/>
</dbReference>
<dbReference type="Pfam" id="PF00977">
    <property type="entry name" value="His_biosynth"/>
    <property type="match status" value="1"/>
</dbReference>
<dbReference type="SUPFAM" id="SSF51366">
    <property type="entry name" value="Ribulose-phoshate binding barrel"/>
    <property type="match status" value="1"/>
</dbReference>
<gene>
    <name evidence="1" type="primary">hisF</name>
    <name type="ordered locus">Msil_2549</name>
</gene>
<proteinExistence type="inferred from homology"/>